<accession>P48632</accession>
<accession>Q51339</accession>
<keyword id="KW-0002">3D-structure</keyword>
<keyword id="KW-0998">Cell outer membrane</keyword>
<keyword id="KW-0903">Direct protein sequencing</keyword>
<keyword id="KW-0406">Ion transport</keyword>
<keyword id="KW-0408">Iron</keyword>
<keyword id="KW-0410">Iron transport</keyword>
<keyword id="KW-0472">Membrane</keyword>
<keyword id="KW-0675">Receptor</keyword>
<keyword id="KW-1185">Reference proteome</keyword>
<keyword id="KW-0732">Signal</keyword>
<keyword id="KW-0798">TonB box</keyword>
<keyword id="KW-0812">Transmembrane</keyword>
<keyword id="KW-1134">Transmembrane beta strand</keyword>
<keyword id="KW-0813">Transport</keyword>
<sequence>MPAPHGLSPLSKAFLMRRAFQRRILPHSLAMALSLPLAGYVQAQEVEFDIPPQALGSALQEFGRQADIQVLYRPEEVRNKRSSAIKGKLEPNQAITELLRGTGASVDFQGNAITISVAEAADSSVDLGATMITSNQLGTITEDSGSYTPGTIATATRLVLTPRETPQSITVVTRQNMDDFGLNNIDDVMRHTPGITVSAYDTDRNNYYARGFSINNFQYDGIPSTARNVGYSAGNTLSDMAIYDRVEVLKGATGLLTGAGSLGATINLIRKKPTHEFKGHVELGAGSWDNYRSELDVSGPLTESGNVRGRAVAAYQDKHSFMDHYERKTSVYYGILEFDLNPDTMLTVGADYQDNDPKGSGWSGSFPLFDSQGNRNDVSRSFNNGAKWSSWEQYTRTVFANLEHNFANGWVGKVQLDHKINGYHAPLGAIMGDWPAPDNSAKIVAQKYTGETKSNSLDIYLTGPFQFLGREHELVVGTSASFSHWEGKSYWNLRNYDNTTDDFINWDGDIGKPDWGTPSQYIDDKTRQLGSYMTARFNVTDDLNLFLGGRVVDYRVTGLNPTIRESGRFIPYVGAVYDLNDTYSVYASYTDIFMPQDSWYRDSSNKLLEPDEGQNYEIGIKGEYLDGRLNTSLAYFEIHEENRAEEDALYNSKPTNPAITYAYKGIKAKTKGYEAEISGELAPGWQVQAGYTHKIIRDDSGKKVSTWEPQDQLSLYTSYKFKGALDKLTVGGGARWQGKSWQMVYNNPRSRWEKFSQEDYWLVDLMARYQITDKLSASVNVNNVFDKTYYTNIGFYTSASYGDPRNLMFSTRWDF</sequence>
<feature type="signal peptide" evidence="1">
    <location>
        <begin position="1"/>
        <end position="43"/>
    </location>
</feature>
<feature type="chain" id="PRO_0000034751" description="Ferripyoverdine receptor">
    <location>
        <begin position="44"/>
        <end position="815"/>
    </location>
</feature>
<feature type="domain" description="TBDR plug" evidence="2">
    <location>
        <begin position="161"/>
        <end position="271"/>
    </location>
</feature>
<feature type="domain" description="TBDR beta-barrel" evidence="2">
    <location>
        <begin position="276"/>
        <end position="815"/>
    </location>
</feature>
<feature type="short sequence motif" description="TonB C-terminal box">
    <location>
        <begin position="798"/>
        <end position="815"/>
    </location>
</feature>
<feature type="sequence conflict" description="In Ref. 1; AAA25819." evidence="3" ref="1">
    <original>Y</original>
    <variation>F</variation>
    <location>
        <position position="716"/>
    </location>
</feature>
<feature type="sequence conflict" description="In Ref. 1; AAA25819." evidence="3" ref="1">
    <location>
        <begin position="745"/>
        <end position="746"/>
    </location>
</feature>
<feature type="sequence conflict" description="In Ref. 1; AAA25819." evidence="3" ref="1">
    <original>S</original>
    <variation>R</variation>
    <location>
        <position position="750"/>
    </location>
</feature>
<feature type="strand" evidence="5">
    <location>
        <begin position="46"/>
        <end position="50"/>
    </location>
</feature>
<feature type="strand" evidence="4">
    <location>
        <begin position="52"/>
        <end position="54"/>
    </location>
</feature>
<feature type="helix" evidence="5">
    <location>
        <begin position="55"/>
        <end position="65"/>
    </location>
</feature>
<feature type="strand" evidence="5">
    <location>
        <begin position="69"/>
        <end position="72"/>
    </location>
</feature>
<feature type="helix" evidence="5">
    <location>
        <begin position="74"/>
        <end position="77"/>
    </location>
</feature>
<feature type="strand" evidence="5">
    <location>
        <begin position="85"/>
        <end position="89"/>
    </location>
</feature>
<feature type="helix" evidence="5">
    <location>
        <begin position="91"/>
        <end position="99"/>
    </location>
</feature>
<feature type="turn" evidence="5">
    <location>
        <begin position="100"/>
        <end position="103"/>
    </location>
</feature>
<feature type="strand" evidence="5">
    <location>
        <begin position="105"/>
        <end position="109"/>
    </location>
</feature>
<feature type="strand" evidence="5">
    <location>
        <begin position="112"/>
        <end position="116"/>
    </location>
</feature>
<feature type="strand" evidence="5">
    <location>
        <begin position="132"/>
        <end position="134"/>
    </location>
</feature>
<feature type="turn" evidence="5">
    <location>
        <begin position="154"/>
        <end position="156"/>
    </location>
</feature>
<feature type="helix" evidence="5">
    <location>
        <begin position="162"/>
        <end position="164"/>
    </location>
</feature>
<feature type="strand" evidence="5">
    <location>
        <begin position="166"/>
        <end position="172"/>
    </location>
</feature>
<feature type="helix" evidence="5">
    <location>
        <begin position="174"/>
        <end position="180"/>
    </location>
</feature>
<feature type="helix" evidence="5">
    <location>
        <begin position="185"/>
        <end position="190"/>
    </location>
</feature>
<feature type="strand" evidence="5">
    <location>
        <begin position="196"/>
        <end position="201"/>
    </location>
</feature>
<feature type="strand" evidence="5">
    <location>
        <begin position="204"/>
        <end position="209"/>
    </location>
</feature>
<feature type="strand" evidence="5">
    <location>
        <begin position="217"/>
        <end position="219"/>
    </location>
</feature>
<feature type="turn" evidence="5">
    <location>
        <begin position="229"/>
        <end position="237"/>
    </location>
</feature>
<feature type="helix" evidence="5">
    <location>
        <begin position="240"/>
        <end position="242"/>
    </location>
</feature>
<feature type="strand" evidence="5">
    <location>
        <begin position="243"/>
        <end position="251"/>
    </location>
</feature>
<feature type="helix" evidence="5">
    <location>
        <begin position="254"/>
        <end position="257"/>
    </location>
</feature>
<feature type="strand" evidence="5">
    <location>
        <begin position="262"/>
        <end position="270"/>
    </location>
</feature>
<feature type="strand" evidence="5">
    <location>
        <begin position="278"/>
        <end position="286"/>
    </location>
</feature>
<feature type="turn" evidence="5">
    <location>
        <begin position="287"/>
        <end position="289"/>
    </location>
</feature>
<feature type="strand" evidence="5">
    <location>
        <begin position="290"/>
        <end position="302"/>
    </location>
</feature>
<feature type="strand" evidence="5">
    <location>
        <begin position="306"/>
        <end position="318"/>
    </location>
</feature>
<feature type="strand" evidence="5">
    <location>
        <begin position="326"/>
        <end position="341"/>
    </location>
</feature>
<feature type="strand" evidence="5">
    <location>
        <begin position="344"/>
        <end position="359"/>
    </location>
</feature>
<feature type="strand" evidence="5">
    <location>
        <begin position="362"/>
        <end position="369"/>
    </location>
</feature>
<feature type="strand" evidence="5">
    <location>
        <begin position="392"/>
        <end position="406"/>
    </location>
</feature>
<feature type="turn" evidence="5">
    <location>
        <begin position="407"/>
        <end position="409"/>
    </location>
</feature>
<feature type="strand" evidence="5">
    <location>
        <begin position="410"/>
        <end position="430"/>
    </location>
</feature>
<feature type="strand" evidence="5">
    <location>
        <begin position="441"/>
        <end position="466"/>
    </location>
</feature>
<feature type="strand" evidence="5">
    <location>
        <begin position="468"/>
        <end position="490"/>
    </location>
</feature>
<feature type="strand" evidence="5">
    <location>
        <begin position="499"/>
        <end position="501"/>
    </location>
</feature>
<feature type="strand" evidence="5">
    <location>
        <begin position="519"/>
        <end position="538"/>
    </location>
</feature>
<feature type="strand" evidence="5">
    <location>
        <begin position="540"/>
        <end position="560"/>
    </location>
</feature>
<feature type="strand" evidence="5">
    <location>
        <begin position="563"/>
        <end position="578"/>
    </location>
</feature>
<feature type="strand" evidence="5">
    <location>
        <begin position="580"/>
        <end position="594"/>
    </location>
</feature>
<feature type="strand" evidence="5">
    <location>
        <begin position="611"/>
        <end position="624"/>
    </location>
</feature>
<feature type="helix" evidence="5">
    <location>
        <begin position="625"/>
        <end position="627"/>
    </location>
</feature>
<feature type="strand" evidence="5">
    <location>
        <begin position="629"/>
        <end position="645"/>
    </location>
</feature>
<feature type="helix" evidence="5">
    <location>
        <begin position="648"/>
        <end position="651"/>
    </location>
</feature>
<feature type="strand" evidence="5">
    <location>
        <begin position="664"/>
        <end position="682"/>
    </location>
</feature>
<feature type="strand" evidence="5">
    <location>
        <begin position="685"/>
        <end position="698"/>
    </location>
</feature>
<feature type="strand" evidence="4">
    <location>
        <begin position="699"/>
        <end position="701"/>
    </location>
</feature>
<feature type="strand" evidence="5">
    <location>
        <begin position="710"/>
        <end position="720"/>
    </location>
</feature>
<feature type="helix" evidence="5">
    <location>
        <begin position="723"/>
        <end position="725"/>
    </location>
</feature>
<feature type="strand" evidence="5">
    <location>
        <begin position="728"/>
        <end position="737"/>
    </location>
</feature>
<feature type="strand" evidence="5">
    <location>
        <begin position="740"/>
        <end position="746"/>
    </location>
</feature>
<feature type="turn" evidence="5">
    <location>
        <begin position="747"/>
        <end position="750"/>
    </location>
</feature>
<feature type="strand" evidence="5">
    <location>
        <begin position="751"/>
        <end position="757"/>
    </location>
</feature>
<feature type="strand" evidence="5">
    <location>
        <begin position="760"/>
        <end position="772"/>
    </location>
</feature>
<feature type="strand" evidence="5">
    <location>
        <begin position="775"/>
        <end position="783"/>
    </location>
</feature>
<feature type="strand" evidence="5">
    <location>
        <begin position="790"/>
        <end position="793"/>
    </location>
</feature>
<feature type="strand" evidence="5">
    <location>
        <begin position="797"/>
        <end position="801"/>
    </location>
</feature>
<feature type="strand" evidence="5">
    <location>
        <begin position="805"/>
        <end position="814"/>
    </location>
</feature>
<comment type="function">
    <text>Receptor for the siderophore ferripyoverdine.</text>
</comment>
<comment type="subcellular location">
    <subcellularLocation>
        <location evidence="2">Cell outer membrane</location>
        <topology evidence="2">Multi-pass membrane protein</topology>
    </subcellularLocation>
</comment>
<comment type="induction">
    <text>By the siderophore, pyoverdine, and under iron starvation conditions.</text>
</comment>
<comment type="similarity">
    <text evidence="3">Belongs to the TonB-dependent receptor family.</text>
</comment>
<comment type="caution">
    <text evidence="3">It is uncertain whether Met-1 or Met-16 is the initiator.</text>
</comment>
<reference key="1">
    <citation type="journal article" date="1993" name="J. Bacteriol.">
        <title>Cloning and nucleotide sequence analysis of the ferripyoverdine receptor gene fpvA of Pseudomonas aeruginosa.</title>
        <authorList>
            <person name="Poole K."/>
            <person name="Neshat S."/>
            <person name="Krebes K."/>
            <person name="Heinrichs D.E."/>
        </authorList>
    </citation>
    <scope>NUCLEOTIDE SEQUENCE [GENOMIC DNA]</scope>
    <scope>PROTEIN SEQUENCE OF 44-64</scope>
    <source>
        <strain>CD10</strain>
    </source>
</reference>
<reference key="2">
    <citation type="journal article" date="1996" name="Gene">
        <title>Characterisation of the pvdE gene which is required for pyoverdine synthesis in Pseudomonas aeruginosa.</title>
        <authorList>
            <person name="McMorran B.J."/>
            <person name="Merriman M.E."/>
            <person name="Rombel I.T."/>
            <person name="Lamont I.L."/>
        </authorList>
    </citation>
    <scope>NUCLEOTIDE SEQUENCE [GENOMIC DNA] OF 1-49</scope>
    <source>
        <strain>PAO</strain>
    </source>
</reference>
<reference key="3">
    <citation type="journal article" date="2000" name="Nature">
        <title>Complete genome sequence of Pseudomonas aeruginosa PAO1, an opportunistic pathogen.</title>
        <authorList>
            <person name="Stover C.K."/>
            <person name="Pham X.-Q.T."/>
            <person name="Erwin A.L."/>
            <person name="Mizoguchi S.D."/>
            <person name="Warrener P."/>
            <person name="Hickey M.J."/>
            <person name="Brinkman F.S.L."/>
            <person name="Hufnagle W.O."/>
            <person name="Kowalik D.J."/>
            <person name="Lagrou M."/>
            <person name="Garber R.L."/>
            <person name="Goltry L."/>
            <person name="Tolentino E."/>
            <person name="Westbrock-Wadman S."/>
            <person name="Yuan Y."/>
            <person name="Brody L.L."/>
            <person name="Coulter S.N."/>
            <person name="Folger K.R."/>
            <person name="Kas A."/>
            <person name="Larbig K."/>
            <person name="Lim R.M."/>
            <person name="Smith K.A."/>
            <person name="Spencer D.H."/>
            <person name="Wong G.K.-S."/>
            <person name="Wu Z."/>
            <person name="Paulsen I.T."/>
            <person name="Reizer J."/>
            <person name="Saier M.H. Jr."/>
            <person name="Hancock R.E.W."/>
            <person name="Lory S."/>
            <person name="Olson M.V."/>
        </authorList>
    </citation>
    <scope>NUCLEOTIDE SEQUENCE [LARGE SCALE GENOMIC DNA]</scope>
    <source>
        <strain>ATCC 15692 / DSM 22644 / CIP 104116 / JCM 14847 / LMG 12228 / 1C / PRS 101 / PAO1</strain>
    </source>
</reference>
<organism>
    <name type="scientific">Pseudomonas aeruginosa (strain ATCC 15692 / DSM 22644 / CIP 104116 / JCM 14847 / LMG 12228 / 1C / PRS 101 / PAO1)</name>
    <dbReference type="NCBI Taxonomy" id="208964"/>
    <lineage>
        <taxon>Bacteria</taxon>
        <taxon>Pseudomonadati</taxon>
        <taxon>Pseudomonadota</taxon>
        <taxon>Gammaproteobacteria</taxon>
        <taxon>Pseudomonadales</taxon>
        <taxon>Pseudomonadaceae</taxon>
        <taxon>Pseudomonas</taxon>
    </lineage>
</organism>
<evidence type="ECO:0000255" key="1"/>
<evidence type="ECO:0000255" key="2">
    <source>
        <dbReference type="PROSITE-ProRule" id="PRU01360"/>
    </source>
</evidence>
<evidence type="ECO:0000305" key="3"/>
<evidence type="ECO:0007829" key="4">
    <source>
        <dbReference type="PDB" id="2IAH"/>
    </source>
</evidence>
<evidence type="ECO:0007829" key="5">
    <source>
        <dbReference type="PDB" id="2W16"/>
    </source>
</evidence>
<gene>
    <name type="primary">fpvA</name>
    <name type="ordered locus">PA2398</name>
</gene>
<protein>
    <recommendedName>
        <fullName>Ferripyoverdine receptor</fullName>
    </recommendedName>
</protein>
<proteinExistence type="evidence at protein level"/>
<dbReference type="EMBL" id="L10210">
    <property type="protein sequence ID" value="AAA25819.1"/>
    <property type="molecule type" value="Genomic_DNA"/>
</dbReference>
<dbReference type="EMBL" id="U07359">
    <property type="protein sequence ID" value="AAB60199.1"/>
    <property type="molecule type" value="Genomic_DNA"/>
</dbReference>
<dbReference type="EMBL" id="AE004091">
    <property type="protein sequence ID" value="AAG05786.1"/>
    <property type="molecule type" value="Genomic_DNA"/>
</dbReference>
<dbReference type="PIR" id="A40601">
    <property type="entry name" value="A40601"/>
</dbReference>
<dbReference type="PIR" id="H83345">
    <property type="entry name" value="H83345"/>
</dbReference>
<dbReference type="RefSeq" id="NP_251088.1">
    <property type="nucleotide sequence ID" value="NC_002516.2"/>
</dbReference>
<dbReference type="RefSeq" id="WP_004349900.1">
    <property type="nucleotide sequence ID" value="NZ_QZGE01000021.1"/>
</dbReference>
<dbReference type="PDB" id="1XKH">
    <property type="method" value="X-ray"/>
    <property type="resolution" value="3.60 A"/>
    <property type="chains" value="A/B/C=129-815"/>
</dbReference>
<dbReference type="PDB" id="2IAH">
    <property type="method" value="X-ray"/>
    <property type="resolution" value="2.73 A"/>
    <property type="chains" value="A=44-815"/>
</dbReference>
<dbReference type="PDB" id="2O5P">
    <property type="method" value="X-ray"/>
    <property type="resolution" value="2.77 A"/>
    <property type="chains" value="A/B=44-815"/>
</dbReference>
<dbReference type="PDB" id="2W16">
    <property type="method" value="X-ray"/>
    <property type="resolution" value="2.71 A"/>
    <property type="chains" value="A/B=44-815"/>
</dbReference>
<dbReference type="PDB" id="2W6T">
    <property type="method" value="X-ray"/>
    <property type="resolution" value="2.90 A"/>
    <property type="chains" value="A/B=44-815"/>
</dbReference>
<dbReference type="PDB" id="2W6U">
    <property type="method" value="X-ray"/>
    <property type="resolution" value="3.00 A"/>
    <property type="chains" value="A/B=44-815"/>
</dbReference>
<dbReference type="PDB" id="2W75">
    <property type="method" value="X-ray"/>
    <property type="resolution" value="2.90 A"/>
    <property type="chains" value="A/B=44-815"/>
</dbReference>
<dbReference type="PDB" id="2W76">
    <property type="method" value="X-ray"/>
    <property type="resolution" value="2.80 A"/>
    <property type="chains" value="A/B=44-815"/>
</dbReference>
<dbReference type="PDB" id="2W77">
    <property type="method" value="X-ray"/>
    <property type="resolution" value="2.90 A"/>
    <property type="chains" value="A/B=44-815"/>
</dbReference>
<dbReference type="PDB" id="2W78">
    <property type="method" value="X-ray"/>
    <property type="resolution" value="3.00 A"/>
    <property type="chains" value="A/B=44-815"/>
</dbReference>
<dbReference type="PDB" id="5ODW">
    <property type="method" value="X-ray"/>
    <property type="resolution" value="2.80 A"/>
    <property type="chains" value="A/B=1-815"/>
</dbReference>
<dbReference type="PDBsum" id="1XKH"/>
<dbReference type="PDBsum" id="2IAH"/>
<dbReference type="PDBsum" id="2O5P"/>
<dbReference type="PDBsum" id="2W16"/>
<dbReference type="PDBsum" id="2W6T"/>
<dbReference type="PDBsum" id="2W6U"/>
<dbReference type="PDBsum" id="2W75"/>
<dbReference type="PDBsum" id="2W76"/>
<dbReference type="PDBsum" id="2W77"/>
<dbReference type="PDBsum" id="2W78"/>
<dbReference type="PDBsum" id="5ODW"/>
<dbReference type="SMR" id="P48632"/>
<dbReference type="FunCoup" id="P48632">
    <property type="interactions" value="10"/>
</dbReference>
<dbReference type="STRING" id="208964.PA2398"/>
<dbReference type="DrugBank" id="DB08249">
    <property type="generic name" value="3,6,9,12,15-PENTAOXATRICOSAN-1-OL"/>
</dbReference>
<dbReference type="TCDB" id="1.B.14.1.6">
    <property type="family name" value="the outer membrane receptor (omr) family"/>
</dbReference>
<dbReference type="PaxDb" id="208964-PA2398"/>
<dbReference type="GeneID" id="878605"/>
<dbReference type="KEGG" id="pae:PA2398"/>
<dbReference type="PATRIC" id="fig|208964.12.peg.2509"/>
<dbReference type="PseudoCAP" id="PA2398"/>
<dbReference type="HOGENOM" id="CLU_008287_9_3_6"/>
<dbReference type="InParanoid" id="P48632"/>
<dbReference type="OrthoDB" id="8663017at2"/>
<dbReference type="PhylomeDB" id="P48632"/>
<dbReference type="BioCyc" id="PAER208964:G1FZ6-2436-MONOMER"/>
<dbReference type="EvolutionaryTrace" id="P48632"/>
<dbReference type="Proteomes" id="UP000002438">
    <property type="component" value="Chromosome"/>
</dbReference>
<dbReference type="GO" id="GO:0009279">
    <property type="term" value="C:cell outer membrane"/>
    <property type="evidence" value="ECO:0000314"/>
    <property type="project" value="CAFA"/>
</dbReference>
<dbReference type="GO" id="GO:0016020">
    <property type="term" value="C:membrane"/>
    <property type="evidence" value="ECO:0000314"/>
    <property type="project" value="CAFA"/>
</dbReference>
<dbReference type="GO" id="GO:0015344">
    <property type="term" value="F:siderophore uptake transmembrane transporter activity"/>
    <property type="evidence" value="ECO:0000318"/>
    <property type="project" value="GO_Central"/>
</dbReference>
<dbReference type="GO" id="GO:0038023">
    <property type="term" value="F:signaling receptor activity"/>
    <property type="evidence" value="ECO:0000314"/>
    <property type="project" value="PseudoCAP"/>
</dbReference>
<dbReference type="GO" id="GO:0002049">
    <property type="term" value="P:pyoverdine biosynthetic process"/>
    <property type="evidence" value="ECO:0000315"/>
    <property type="project" value="PseudoCAP"/>
</dbReference>
<dbReference type="GO" id="GO:0033214">
    <property type="term" value="P:siderophore-dependent iron import into cell"/>
    <property type="evidence" value="ECO:0000318"/>
    <property type="project" value="GO_Central"/>
</dbReference>
<dbReference type="CDD" id="cd01347">
    <property type="entry name" value="ligand_gated_channel"/>
    <property type="match status" value="1"/>
</dbReference>
<dbReference type="FunFam" id="2.170.130.10:FF:000010">
    <property type="entry name" value="Ferripyoverdine receptor"/>
    <property type="match status" value="1"/>
</dbReference>
<dbReference type="Gene3D" id="3.55.50.30">
    <property type="match status" value="1"/>
</dbReference>
<dbReference type="Gene3D" id="2.40.170.20">
    <property type="entry name" value="TonB-dependent receptor, beta-barrel domain"/>
    <property type="match status" value="1"/>
</dbReference>
<dbReference type="Gene3D" id="2.170.130.10">
    <property type="entry name" value="TonB-dependent receptor, plug domain"/>
    <property type="match status" value="1"/>
</dbReference>
<dbReference type="InterPro" id="IPR012910">
    <property type="entry name" value="Plug_dom"/>
</dbReference>
<dbReference type="InterPro" id="IPR037066">
    <property type="entry name" value="Plug_dom_sf"/>
</dbReference>
<dbReference type="InterPro" id="IPR011662">
    <property type="entry name" value="Secretin/TonB_short_N"/>
</dbReference>
<dbReference type="InterPro" id="IPR039426">
    <property type="entry name" value="TonB-dep_rcpt-like"/>
</dbReference>
<dbReference type="InterPro" id="IPR000531">
    <property type="entry name" value="TonB-dep_rcpt_b-brl"/>
</dbReference>
<dbReference type="InterPro" id="IPR036942">
    <property type="entry name" value="TonB_rcpt_b-brl_sf"/>
</dbReference>
<dbReference type="InterPro" id="IPR010917">
    <property type="entry name" value="TonB_rcpt_CS"/>
</dbReference>
<dbReference type="InterPro" id="IPR010105">
    <property type="entry name" value="TonB_sidphr_rcpt"/>
</dbReference>
<dbReference type="NCBIfam" id="TIGR01783">
    <property type="entry name" value="TonB-siderophor"/>
    <property type="match status" value="1"/>
</dbReference>
<dbReference type="PANTHER" id="PTHR32552">
    <property type="entry name" value="FERRICHROME IRON RECEPTOR-RELATED"/>
    <property type="match status" value="1"/>
</dbReference>
<dbReference type="PANTHER" id="PTHR32552:SF74">
    <property type="entry name" value="HYDROXAMATE SIDEROPHORE RECEPTOR FHUE"/>
    <property type="match status" value="1"/>
</dbReference>
<dbReference type="Pfam" id="PF07715">
    <property type="entry name" value="Plug"/>
    <property type="match status" value="1"/>
</dbReference>
<dbReference type="Pfam" id="PF07660">
    <property type="entry name" value="STN"/>
    <property type="match status" value="1"/>
</dbReference>
<dbReference type="Pfam" id="PF00593">
    <property type="entry name" value="TonB_dep_Rec_b-barrel"/>
    <property type="match status" value="1"/>
</dbReference>
<dbReference type="SMART" id="SM00965">
    <property type="entry name" value="STN"/>
    <property type="match status" value="1"/>
</dbReference>
<dbReference type="SUPFAM" id="SSF56935">
    <property type="entry name" value="Porins"/>
    <property type="match status" value="1"/>
</dbReference>
<dbReference type="PROSITE" id="PS01156">
    <property type="entry name" value="TONB_DEPENDENT_REC_2"/>
    <property type="match status" value="1"/>
</dbReference>
<dbReference type="PROSITE" id="PS52016">
    <property type="entry name" value="TONB_DEPENDENT_REC_3"/>
    <property type="match status" value="1"/>
</dbReference>
<name>FPVA_PSEAE</name>